<dbReference type="EC" id="1.6.5.9" evidence="1"/>
<dbReference type="EMBL" id="BX571856">
    <property type="protein sequence ID" value="CAG39909.1"/>
    <property type="molecule type" value="Genomic_DNA"/>
</dbReference>
<dbReference type="RefSeq" id="WP_000046076.1">
    <property type="nucleotide sequence ID" value="NC_002952.2"/>
</dbReference>
<dbReference type="SMR" id="Q6GIE7"/>
<dbReference type="KEGG" id="sar:SAR0903"/>
<dbReference type="HOGENOM" id="CLU_021377_7_2_9"/>
<dbReference type="Proteomes" id="UP000000596">
    <property type="component" value="Chromosome"/>
</dbReference>
<dbReference type="GO" id="GO:0005886">
    <property type="term" value="C:plasma membrane"/>
    <property type="evidence" value="ECO:0007669"/>
    <property type="project" value="UniProtKB-SubCell"/>
</dbReference>
<dbReference type="GO" id="GO:0003955">
    <property type="term" value="F:NAD(P)H dehydrogenase (quinone) activity"/>
    <property type="evidence" value="ECO:0007669"/>
    <property type="project" value="TreeGrafter"/>
</dbReference>
<dbReference type="GO" id="GO:0050136">
    <property type="term" value="F:NADH:ubiquinone reductase (non-electrogenic) activity"/>
    <property type="evidence" value="ECO:0007669"/>
    <property type="project" value="UniProtKB-EC"/>
</dbReference>
<dbReference type="GO" id="GO:0019646">
    <property type="term" value="P:aerobic electron transport chain"/>
    <property type="evidence" value="ECO:0007669"/>
    <property type="project" value="TreeGrafter"/>
</dbReference>
<dbReference type="FunFam" id="3.50.50.100:FF:000004">
    <property type="entry name" value="Pyridine nucleotide-disulfide oxidoreductase"/>
    <property type="match status" value="1"/>
</dbReference>
<dbReference type="Gene3D" id="3.50.50.100">
    <property type="match status" value="1"/>
</dbReference>
<dbReference type="InterPro" id="IPR036188">
    <property type="entry name" value="FAD/NAD-bd_sf"/>
</dbReference>
<dbReference type="InterPro" id="IPR023753">
    <property type="entry name" value="FAD/NAD-binding_dom"/>
</dbReference>
<dbReference type="InterPro" id="IPR051169">
    <property type="entry name" value="NADH-Q_oxidoreductase"/>
</dbReference>
<dbReference type="PANTHER" id="PTHR42913:SF3">
    <property type="entry name" value="64 KDA MITOCHONDRIAL NADH DEHYDROGENASE (EUROFUNG)"/>
    <property type="match status" value="1"/>
</dbReference>
<dbReference type="PANTHER" id="PTHR42913">
    <property type="entry name" value="APOPTOSIS-INDUCING FACTOR 1"/>
    <property type="match status" value="1"/>
</dbReference>
<dbReference type="Pfam" id="PF07992">
    <property type="entry name" value="Pyr_redox_2"/>
    <property type="match status" value="1"/>
</dbReference>
<dbReference type="PRINTS" id="PR00368">
    <property type="entry name" value="FADPNR"/>
</dbReference>
<dbReference type="SUPFAM" id="SSF51905">
    <property type="entry name" value="FAD/NAD(P)-binding domain"/>
    <property type="match status" value="2"/>
</dbReference>
<gene>
    <name type="ordered locus">SAR0903</name>
</gene>
<reference key="1">
    <citation type="journal article" date="2004" name="Proc. Natl. Acad. Sci. U.S.A.">
        <title>Complete genomes of two clinical Staphylococcus aureus strains: evidence for the rapid evolution of virulence and drug resistance.</title>
        <authorList>
            <person name="Holden M.T.G."/>
            <person name="Feil E.J."/>
            <person name="Lindsay J.A."/>
            <person name="Peacock S.J."/>
            <person name="Day N.P.J."/>
            <person name="Enright M.C."/>
            <person name="Foster T.J."/>
            <person name="Moore C.E."/>
            <person name="Hurst L."/>
            <person name="Atkin R."/>
            <person name="Barron A."/>
            <person name="Bason N."/>
            <person name="Bentley S.D."/>
            <person name="Chillingworth C."/>
            <person name="Chillingworth T."/>
            <person name="Churcher C."/>
            <person name="Clark L."/>
            <person name="Corton C."/>
            <person name="Cronin A."/>
            <person name="Doggett J."/>
            <person name="Dowd L."/>
            <person name="Feltwell T."/>
            <person name="Hance Z."/>
            <person name="Harris B."/>
            <person name="Hauser H."/>
            <person name="Holroyd S."/>
            <person name="Jagels K."/>
            <person name="James K.D."/>
            <person name="Lennard N."/>
            <person name="Line A."/>
            <person name="Mayes R."/>
            <person name="Moule S."/>
            <person name="Mungall K."/>
            <person name="Ormond D."/>
            <person name="Quail M.A."/>
            <person name="Rabbinowitsch E."/>
            <person name="Rutherford K.M."/>
            <person name="Sanders M."/>
            <person name="Sharp S."/>
            <person name="Simmonds M."/>
            <person name="Stevens K."/>
            <person name="Whitehead S."/>
            <person name="Barrell B.G."/>
            <person name="Spratt B.G."/>
            <person name="Parkhill J."/>
        </authorList>
    </citation>
    <scope>NUCLEOTIDE SEQUENCE [LARGE SCALE GENOMIC DNA]</scope>
    <source>
        <strain>MRSA252</strain>
    </source>
</reference>
<organism>
    <name type="scientific">Staphylococcus aureus (strain MRSA252)</name>
    <dbReference type="NCBI Taxonomy" id="282458"/>
    <lineage>
        <taxon>Bacteria</taxon>
        <taxon>Bacillati</taxon>
        <taxon>Bacillota</taxon>
        <taxon>Bacilli</taxon>
        <taxon>Bacillales</taxon>
        <taxon>Staphylococcaceae</taxon>
        <taxon>Staphylococcus</taxon>
    </lineage>
</organism>
<accession>Q6GIE7</accession>
<keyword id="KW-1003">Cell membrane</keyword>
<keyword id="KW-0274">FAD</keyword>
<keyword id="KW-0285">Flavoprotein</keyword>
<keyword id="KW-0472">Membrane</keyword>
<keyword id="KW-0520">NAD</keyword>
<keyword id="KW-0560">Oxidoreductase</keyword>
<proteinExistence type="inferred from homology"/>
<name>NDH_STAAR</name>
<protein>
    <recommendedName>
        <fullName evidence="1">Type II NADH:quinone oxidoreductase</fullName>
        <ecNumber evidence="1">1.6.5.9</ecNumber>
    </recommendedName>
    <alternativeName>
        <fullName evidence="1">NDH-2</fullName>
    </alternativeName>
</protein>
<sequence length="402" mass="44104">MAQDRKKVLVLGAGYAGLQTVTKLQKAISTEEAEITLINKNEYHYEATWLHEASAGTLNYEDVLYPVESVLKKDKVNFVQAEVTKIDRDAKKVETNQGIYDFDILVVALGFVSETFGIEGMKDHAFQIENVITARELSRHIEDKFANYAASKEKDDNDLSILVGGAGFTGVEFLGELTDRIPELCSKYGVDQNKVKITCVEAAPKMLPMFSEELVNHAVSYLEDRGVEFKIATPIVACNEKGFVVEVDGEKQQLNAGTSVWAAGVRGSKLMEESFEGVKRGRIVTKQDLTINGYDNIFVIGDCSAFIPAGEERPLPTTAQIAMQQGESVAKNIKRILNGESTEEFEYVDRGTVCSLGSHDGVGMVFGKPIAGKKAAFMKKVIDTRAVFKIGGIGLAFKKGKF</sequence>
<comment type="function">
    <text evidence="1">Alternative, nonproton pumping NADH:quinone oxidoreductase that delivers electrons to the respiratory chain by oxidation of NADH and reduction of quinones, and contributes to the regeneration of NAD(+).</text>
</comment>
<comment type="catalytic activity">
    <reaction evidence="1">
        <text>a quinone + NADH + H(+) = a quinol + NAD(+)</text>
        <dbReference type="Rhea" id="RHEA:46160"/>
        <dbReference type="ChEBI" id="CHEBI:15378"/>
        <dbReference type="ChEBI" id="CHEBI:24646"/>
        <dbReference type="ChEBI" id="CHEBI:57540"/>
        <dbReference type="ChEBI" id="CHEBI:57945"/>
        <dbReference type="ChEBI" id="CHEBI:132124"/>
        <dbReference type="EC" id="1.6.5.9"/>
    </reaction>
</comment>
<comment type="cofactor">
    <cofactor evidence="1">
        <name>FAD</name>
        <dbReference type="ChEBI" id="CHEBI:57692"/>
    </cofactor>
    <text evidence="1">Binds 1 FAD per subunit.</text>
</comment>
<comment type="subcellular location">
    <subcellularLocation>
        <location evidence="1">Cell membrane</location>
    </subcellularLocation>
</comment>
<comment type="similarity">
    <text evidence="2">Belongs to the NADH dehydrogenase family.</text>
</comment>
<feature type="chain" id="PRO_0000287366" description="Type II NADH:quinone oxidoreductase">
    <location>
        <begin position="1"/>
        <end position="402"/>
    </location>
</feature>
<feature type="active site" evidence="1">
    <location>
        <position position="172"/>
    </location>
</feature>
<feature type="binding site" evidence="1">
    <location>
        <begin position="12"/>
        <end position="16"/>
    </location>
    <ligand>
        <name>FAD</name>
        <dbReference type="ChEBI" id="CHEBI:57692"/>
    </ligand>
</feature>
<feature type="binding site" evidence="1">
    <location>
        <begin position="39"/>
        <end position="40"/>
    </location>
    <ligand>
        <name>FAD</name>
        <dbReference type="ChEBI" id="CHEBI:57692"/>
    </ligand>
</feature>
<feature type="binding site" evidence="1">
    <location>
        <position position="83"/>
    </location>
    <ligand>
        <name>FAD</name>
        <dbReference type="ChEBI" id="CHEBI:57692"/>
    </ligand>
</feature>
<feature type="binding site" evidence="1">
    <location>
        <position position="302"/>
    </location>
    <ligand>
        <name>FAD</name>
        <dbReference type="ChEBI" id="CHEBI:57692"/>
    </ligand>
</feature>
<feature type="binding site" evidence="1">
    <location>
        <begin position="319"/>
        <end position="320"/>
    </location>
    <ligand>
        <name>FAD</name>
        <dbReference type="ChEBI" id="CHEBI:57692"/>
    </ligand>
</feature>
<feature type="binding site" evidence="1">
    <location>
        <position position="379"/>
    </location>
    <ligand>
        <name>FAD</name>
        <dbReference type="ChEBI" id="CHEBI:57692"/>
    </ligand>
</feature>
<evidence type="ECO:0000250" key="1">
    <source>
        <dbReference type="UniProtKB" id="Q2FZV7"/>
    </source>
</evidence>
<evidence type="ECO:0000305" key="2"/>